<sequence length="207" mass="22458">MPKVSLFNQTGSQVGEIELADNVFGVEPNESVLHDAVVMQQASLRQGTHKTKGRSEVRGGGRKPWRQKGTGRARQGSIRSPQWVGGGVVFGPTPRSYSYKLPKKVRRLAIKSALSSKVKDSELVVLDDLKLEAIKTKAMKDVLASLSVDSKALVVTADYNENVALSARNLPGITFLTADGVNVLDLLKHDKLVITKDAVEKVEEVLA</sequence>
<name>RL4_SHOC1</name>
<evidence type="ECO:0000255" key="1">
    <source>
        <dbReference type="HAMAP-Rule" id="MF_01328"/>
    </source>
</evidence>
<evidence type="ECO:0000256" key="2">
    <source>
        <dbReference type="SAM" id="MobiDB-lite"/>
    </source>
</evidence>
<evidence type="ECO:0000305" key="3"/>
<protein>
    <recommendedName>
        <fullName evidence="1">Large ribosomal subunit protein uL4</fullName>
    </recommendedName>
    <alternativeName>
        <fullName evidence="3">50S ribosomal protein L4</fullName>
    </alternativeName>
</protein>
<accession>Q5WLR1</accession>
<keyword id="KW-1185">Reference proteome</keyword>
<keyword id="KW-0687">Ribonucleoprotein</keyword>
<keyword id="KW-0689">Ribosomal protein</keyword>
<keyword id="KW-0694">RNA-binding</keyword>
<keyword id="KW-0699">rRNA-binding</keyword>
<reference key="1">
    <citation type="submission" date="2003-10" db="EMBL/GenBank/DDBJ databases">
        <title>The complete genome sequence of the alkaliphilic Bacillus clausii KSM-K16.</title>
        <authorList>
            <person name="Takaki Y."/>
            <person name="Kageyama Y."/>
            <person name="Shimamura S."/>
            <person name="Suzuki H."/>
            <person name="Nishi S."/>
            <person name="Hatada Y."/>
            <person name="Kawai S."/>
            <person name="Ito S."/>
            <person name="Horikoshi K."/>
        </authorList>
    </citation>
    <scope>NUCLEOTIDE SEQUENCE [LARGE SCALE GENOMIC DNA]</scope>
    <source>
        <strain>KSM-K16</strain>
    </source>
</reference>
<comment type="function">
    <text evidence="1">One of the primary rRNA binding proteins, this protein initially binds near the 5'-end of the 23S rRNA. It is important during the early stages of 50S assembly. It makes multiple contacts with different domains of the 23S rRNA in the assembled 50S subunit and ribosome.</text>
</comment>
<comment type="function">
    <text evidence="1">Forms part of the polypeptide exit tunnel.</text>
</comment>
<comment type="subunit">
    <text evidence="1">Part of the 50S ribosomal subunit.</text>
</comment>
<comment type="similarity">
    <text evidence="1">Belongs to the universal ribosomal protein uL4 family.</text>
</comment>
<organism>
    <name type="scientific">Shouchella clausii (strain KSM-K16)</name>
    <name type="common">Alkalihalobacillus clausii</name>
    <dbReference type="NCBI Taxonomy" id="66692"/>
    <lineage>
        <taxon>Bacteria</taxon>
        <taxon>Bacillati</taxon>
        <taxon>Bacillota</taxon>
        <taxon>Bacilli</taxon>
        <taxon>Bacillales</taxon>
        <taxon>Bacillaceae</taxon>
        <taxon>Shouchella</taxon>
    </lineage>
</organism>
<feature type="chain" id="PRO_0000242339" description="Large ribosomal subunit protein uL4">
    <location>
        <begin position="1"/>
        <end position="207"/>
    </location>
</feature>
<feature type="region of interest" description="Disordered" evidence="2">
    <location>
        <begin position="44"/>
        <end position="77"/>
    </location>
</feature>
<feature type="compositionally biased region" description="Basic residues" evidence="2">
    <location>
        <begin position="60"/>
        <end position="71"/>
    </location>
</feature>
<gene>
    <name evidence="1" type="primary">rplD</name>
    <name type="ordered locus">ABC0151</name>
</gene>
<dbReference type="EMBL" id="AP006627">
    <property type="protein sequence ID" value="BAD62694.1"/>
    <property type="molecule type" value="Genomic_DNA"/>
</dbReference>
<dbReference type="RefSeq" id="WP_011245015.1">
    <property type="nucleotide sequence ID" value="NC_006582.1"/>
</dbReference>
<dbReference type="SMR" id="Q5WLR1"/>
<dbReference type="STRING" id="66692.ABC0151"/>
<dbReference type="KEGG" id="bcl:ABC0151"/>
<dbReference type="eggNOG" id="COG0088">
    <property type="taxonomic scope" value="Bacteria"/>
</dbReference>
<dbReference type="HOGENOM" id="CLU_041575_5_2_9"/>
<dbReference type="OrthoDB" id="9803201at2"/>
<dbReference type="Proteomes" id="UP000001168">
    <property type="component" value="Chromosome"/>
</dbReference>
<dbReference type="GO" id="GO:1990904">
    <property type="term" value="C:ribonucleoprotein complex"/>
    <property type="evidence" value="ECO:0007669"/>
    <property type="project" value="UniProtKB-KW"/>
</dbReference>
<dbReference type="GO" id="GO:0005840">
    <property type="term" value="C:ribosome"/>
    <property type="evidence" value="ECO:0007669"/>
    <property type="project" value="UniProtKB-KW"/>
</dbReference>
<dbReference type="GO" id="GO:0019843">
    <property type="term" value="F:rRNA binding"/>
    <property type="evidence" value="ECO:0007669"/>
    <property type="project" value="UniProtKB-UniRule"/>
</dbReference>
<dbReference type="GO" id="GO:0003735">
    <property type="term" value="F:structural constituent of ribosome"/>
    <property type="evidence" value="ECO:0007669"/>
    <property type="project" value="InterPro"/>
</dbReference>
<dbReference type="GO" id="GO:0006412">
    <property type="term" value="P:translation"/>
    <property type="evidence" value="ECO:0007669"/>
    <property type="project" value="UniProtKB-UniRule"/>
</dbReference>
<dbReference type="FunFam" id="3.40.1370.10:FF:000003">
    <property type="entry name" value="50S ribosomal protein L4"/>
    <property type="match status" value="1"/>
</dbReference>
<dbReference type="Gene3D" id="3.40.1370.10">
    <property type="match status" value="1"/>
</dbReference>
<dbReference type="HAMAP" id="MF_01328_B">
    <property type="entry name" value="Ribosomal_uL4_B"/>
    <property type="match status" value="1"/>
</dbReference>
<dbReference type="InterPro" id="IPR002136">
    <property type="entry name" value="Ribosomal_uL4"/>
</dbReference>
<dbReference type="InterPro" id="IPR013005">
    <property type="entry name" value="Ribosomal_uL4-like"/>
</dbReference>
<dbReference type="InterPro" id="IPR023574">
    <property type="entry name" value="Ribosomal_uL4_dom_sf"/>
</dbReference>
<dbReference type="NCBIfam" id="TIGR03953">
    <property type="entry name" value="rplD_bact"/>
    <property type="match status" value="1"/>
</dbReference>
<dbReference type="PANTHER" id="PTHR10746">
    <property type="entry name" value="50S RIBOSOMAL PROTEIN L4"/>
    <property type="match status" value="1"/>
</dbReference>
<dbReference type="PANTHER" id="PTHR10746:SF6">
    <property type="entry name" value="LARGE RIBOSOMAL SUBUNIT PROTEIN UL4M"/>
    <property type="match status" value="1"/>
</dbReference>
<dbReference type="Pfam" id="PF00573">
    <property type="entry name" value="Ribosomal_L4"/>
    <property type="match status" value="1"/>
</dbReference>
<dbReference type="SUPFAM" id="SSF52166">
    <property type="entry name" value="Ribosomal protein L4"/>
    <property type="match status" value="1"/>
</dbReference>
<proteinExistence type="inferred from homology"/>